<organism>
    <name type="scientific">Haloquadratum walsbyi (strain DSM 16790 / HBSQ001)</name>
    <dbReference type="NCBI Taxonomy" id="362976"/>
    <lineage>
        <taxon>Archaea</taxon>
        <taxon>Methanobacteriati</taxon>
        <taxon>Methanobacteriota</taxon>
        <taxon>Stenosarchaea group</taxon>
        <taxon>Halobacteria</taxon>
        <taxon>Halobacteriales</taxon>
        <taxon>Haloferacaceae</taxon>
        <taxon>Haloquadratum</taxon>
    </lineage>
</organism>
<gene>
    <name evidence="1" type="primary">ligA</name>
    <name type="ordered locus">HQ_3698A</name>
</gene>
<sequence length="747" mass="81884">MSTTISDSIASMISRINDIVITVAPSGDSNDSHRHSQIICDGGRTIQPLDDSSETTLAYADPNNPYLSNIDGDFRPIEQLSEEAAVEQATQLREAIREHDYQYYIRASPIIADRAYDILFDRLQALEDIFNLDTEASPTRRVGGEPLDELETVEHVTSMLSIDQSTAVDSVRDFDERVRDVVGDLEYICEPKFDGLSVEVIYEDGEYIRAATRGDGNRGDDVTAQVETVGAVPLKLHGDYPSYLAVRGEVYMPKAGFREYNRERIECDEKPFANPRNAAAGTLRQLDPGVVAERPLSCFFYDILDATELPPDQWTTLNDLQSWGLRTNDRISRVDSIDDAIAYRDQLKAARAELNYEIDGTVIKVNDRGNREILGATSRSVRWAFAYKFPPRAEITHITDIVVQVGRTGRLTPVALLDPVDVGGVTVSRASLHNPEEIKRLSVNSGDEVRVRRAGDVIPEVAEVTQKRATGTFNFPNQCPICHSSVEQDGPLAFCTGGLTCDAQLVRTIVHYGSRSALDIDGLGEQRVEQLVESGVIGELADLYTLSVADLSKLDGWGTTSAENLIQAISETQTPSLTDFLVGLGIPEVGPTIARNLAGTFDNFDAIIDADEAALREIEDIGPTVSTHISEFFTNEQNRAAIDNLLSAGVTPQTQQSTATTNAPLSDLTFVFTGSLSVPRTTATTYIERHGGNATGSVSSNTDYLVIGDNPGSTKRIDAERNDVPEIDETEFTELLAEHDDTLTWPP</sequence>
<evidence type="ECO:0000255" key="1">
    <source>
        <dbReference type="HAMAP-Rule" id="MF_01588"/>
    </source>
</evidence>
<name>DNLJ_HALWD</name>
<reference key="1">
    <citation type="journal article" date="2006" name="BMC Genomics">
        <title>The genome of the square archaeon Haloquadratum walsbyi: life at the limits of water activity.</title>
        <authorList>
            <person name="Bolhuis H."/>
            <person name="Palm P."/>
            <person name="Wende A."/>
            <person name="Falb M."/>
            <person name="Rampp M."/>
            <person name="Rodriguez-Valera F."/>
            <person name="Pfeiffer F."/>
            <person name="Oesterhelt D."/>
        </authorList>
    </citation>
    <scope>NUCLEOTIDE SEQUENCE [LARGE SCALE GENOMIC DNA]</scope>
    <source>
        <strain>DSM 16790 / HBSQ001</strain>
    </source>
</reference>
<feature type="chain" id="PRO_0000313529" description="DNA ligase">
    <location>
        <begin position="1"/>
        <end position="747"/>
    </location>
</feature>
<feature type="domain" description="BRCT" evidence="1">
    <location>
        <begin position="660"/>
        <end position="747"/>
    </location>
</feature>
<feature type="active site" description="N6-AMP-lysine intermediate" evidence="1">
    <location>
        <position position="192"/>
    </location>
</feature>
<feature type="binding site" evidence="1">
    <location>
        <begin position="113"/>
        <end position="117"/>
    </location>
    <ligand>
        <name>NAD(+)</name>
        <dbReference type="ChEBI" id="CHEBI:57540"/>
    </ligand>
</feature>
<feature type="binding site" evidence="1">
    <location>
        <begin position="161"/>
        <end position="162"/>
    </location>
    <ligand>
        <name>NAD(+)</name>
        <dbReference type="ChEBI" id="CHEBI:57540"/>
    </ligand>
</feature>
<feature type="binding site" evidence="1">
    <location>
        <position position="190"/>
    </location>
    <ligand>
        <name>NAD(+)</name>
        <dbReference type="ChEBI" id="CHEBI:57540"/>
    </ligand>
</feature>
<feature type="binding site" evidence="1">
    <location>
        <position position="213"/>
    </location>
    <ligand>
        <name>NAD(+)</name>
        <dbReference type="ChEBI" id="CHEBI:57540"/>
    </ligand>
</feature>
<feature type="binding site" evidence="1">
    <location>
        <position position="249"/>
    </location>
    <ligand>
        <name>NAD(+)</name>
        <dbReference type="ChEBI" id="CHEBI:57540"/>
    </ligand>
</feature>
<feature type="binding site" evidence="1">
    <location>
        <position position="364"/>
    </location>
    <ligand>
        <name>NAD(+)</name>
        <dbReference type="ChEBI" id="CHEBI:57540"/>
    </ligand>
</feature>
<feature type="binding site" evidence="1">
    <location>
        <position position="388"/>
    </location>
    <ligand>
        <name>NAD(+)</name>
        <dbReference type="ChEBI" id="CHEBI:57540"/>
    </ligand>
</feature>
<feature type="binding site" evidence="1">
    <location>
        <position position="479"/>
    </location>
    <ligand>
        <name>Zn(2+)</name>
        <dbReference type="ChEBI" id="CHEBI:29105"/>
    </ligand>
</feature>
<feature type="binding site" evidence="1">
    <location>
        <position position="482"/>
    </location>
    <ligand>
        <name>Zn(2+)</name>
        <dbReference type="ChEBI" id="CHEBI:29105"/>
    </ligand>
</feature>
<feature type="binding site" evidence="1">
    <location>
        <position position="495"/>
    </location>
    <ligand>
        <name>Zn(2+)</name>
        <dbReference type="ChEBI" id="CHEBI:29105"/>
    </ligand>
</feature>
<feature type="binding site" evidence="1">
    <location>
        <position position="501"/>
    </location>
    <ligand>
        <name>Zn(2+)</name>
        <dbReference type="ChEBI" id="CHEBI:29105"/>
    </ligand>
</feature>
<proteinExistence type="inferred from homology"/>
<protein>
    <recommendedName>
        <fullName evidence="1">DNA ligase</fullName>
        <ecNumber evidence="1">6.5.1.2</ecNumber>
    </recommendedName>
    <alternativeName>
        <fullName evidence="1">Polydeoxyribonucleotide synthase [NAD(+)]</fullName>
    </alternativeName>
</protein>
<dbReference type="EC" id="6.5.1.2" evidence="1"/>
<dbReference type="EMBL" id="AM180088">
    <property type="protein sequence ID" value="CAJ53784.2"/>
    <property type="molecule type" value="Genomic_DNA"/>
</dbReference>
<dbReference type="RefSeq" id="WP_231858864.1">
    <property type="nucleotide sequence ID" value="NC_008212.1"/>
</dbReference>
<dbReference type="SMR" id="Q18E49"/>
<dbReference type="STRING" id="362976.HQ_3698A"/>
<dbReference type="GeneID" id="4194188"/>
<dbReference type="KEGG" id="hwa:HQ_3698A"/>
<dbReference type="eggNOG" id="arCOG04754">
    <property type="taxonomic scope" value="Archaea"/>
</dbReference>
<dbReference type="HOGENOM" id="CLU_007764_2_1_2"/>
<dbReference type="Proteomes" id="UP000001975">
    <property type="component" value="Chromosome"/>
</dbReference>
<dbReference type="GO" id="GO:0005829">
    <property type="term" value="C:cytosol"/>
    <property type="evidence" value="ECO:0007669"/>
    <property type="project" value="TreeGrafter"/>
</dbReference>
<dbReference type="GO" id="GO:0003911">
    <property type="term" value="F:DNA ligase (NAD+) activity"/>
    <property type="evidence" value="ECO:0007669"/>
    <property type="project" value="UniProtKB-UniRule"/>
</dbReference>
<dbReference type="GO" id="GO:0046872">
    <property type="term" value="F:metal ion binding"/>
    <property type="evidence" value="ECO:0007669"/>
    <property type="project" value="UniProtKB-KW"/>
</dbReference>
<dbReference type="GO" id="GO:0006281">
    <property type="term" value="P:DNA repair"/>
    <property type="evidence" value="ECO:0007669"/>
    <property type="project" value="UniProtKB-KW"/>
</dbReference>
<dbReference type="GO" id="GO:0006260">
    <property type="term" value="P:DNA replication"/>
    <property type="evidence" value="ECO:0007669"/>
    <property type="project" value="UniProtKB-KW"/>
</dbReference>
<dbReference type="CDD" id="cd17748">
    <property type="entry name" value="BRCT_DNA_ligase_like"/>
    <property type="match status" value="1"/>
</dbReference>
<dbReference type="CDD" id="cd00114">
    <property type="entry name" value="LIGANc"/>
    <property type="match status" value="1"/>
</dbReference>
<dbReference type="FunFam" id="1.10.150.20:FF:000007">
    <property type="entry name" value="DNA ligase"/>
    <property type="match status" value="1"/>
</dbReference>
<dbReference type="Gene3D" id="1.10.150.20">
    <property type="entry name" value="5' to 3' exonuclease, C-terminal subdomain"/>
    <property type="match status" value="2"/>
</dbReference>
<dbReference type="Gene3D" id="3.40.50.10190">
    <property type="entry name" value="BRCT domain"/>
    <property type="match status" value="1"/>
</dbReference>
<dbReference type="Gene3D" id="3.30.470.30">
    <property type="entry name" value="DNA ligase/mRNA capping enzyme"/>
    <property type="match status" value="1"/>
</dbReference>
<dbReference type="Gene3D" id="1.10.287.610">
    <property type="entry name" value="Helix hairpin bin"/>
    <property type="match status" value="1"/>
</dbReference>
<dbReference type="Gene3D" id="2.40.50.140">
    <property type="entry name" value="Nucleic acid-binding proteins"/>
    <property type="match status" value="1"/>
</dbReference>
<dbReference type="HAMAP" id="MF_01588">
    <property type="entry name" value="DNA_ligase_A"/>
    <property type="match status" value="1"/>
</dbReference>
<dbReference type="InterPro" id="IPR001357">
    <property type="entry name" value="BRCT_dom"/>
</dbReference>
<dbReference type="InterPro" id="IPR036420">
    <property type="entry name" value="BRCT_dom_sf"/>
</dbReference>
<dbReference type="InterPro" id="IPR041663">
    <property type="entry name" value="DisA/LigA_HHH"/>
</dbReference>
<dbReference type="InterPro" id="IPR001679">
    <property type="entry name" value="DNA_ligase"/>
</dbReference>
<dbReference type="InterPro" id="IPR033136">
    <property type="entry name" value="DNA_ligase_CS"/>
</dbReference>
<dbReference type="InterPro" id="IPR013839">
    <property type="entry name" value="DNAligase_adenylation"/>
</dbReference>
<dbReference type="InterPro" id="IPR013840">
    <property type="entry name" value="DNAligase_N"/>
</dbReference>
<dbReference type="InterPro" id="IPR012340">
    <property type="entry name" value="NA-bd_OB-fold"/>
</dbReference>
<dbReference type="InterPro" id="IPR004150">
    <property type="entry name" value="NAD_DNA_ligase_OB"/>
</dbReference>
<dbReference type="InterPro" id="IPR010994">
    <property type="entry name" value="RuvA_2-like"/>
</dbReference>
<dbReference type="NCBIfam" id="TIGR00575">
    <property type="entry name" value="dnlj"/>
    <property type="match status" value="1"/>
</dbReference>
<dbReference type="NCBIfam" id="NF005932">
    <property type="entry name" value="PRK07956.1"/>
    <property type="match status" value="1"/>
</dbReference>
<dbReference type="NCBIfam" id="NF010931">
    <property type="entry name" value="PRK14351.1"/>
    <property type="match status" value="1"/>
</dbReference>
<dbReference type="PANTHER" id="PTHR23389">
    <property type="entry name" value="CHROMOSOME TRANSMISSION FIDELITY FACTOR 18"/>
    <property type="match status" value="1"/>
</dbReference>
<dbReference type="PANTHER" id="PTHR23389:SF9">
    <property type="entry name" value="DNA LIGASE"/>
    <property type="match status" value="1"/>
</dbReference>
<dbReference type="Pfam" id="PF00533">
    <property type="entry name" value="BRCT"/>
    <property type="match status" value="1"/>
</dbReference>
<dbReference type="Pfam" id="PF01653">
    <property type="entry name" value="DNA_ligase_aden"/>
    <property type="match status" value="1"/>
</dbReference>
<dbReference type="Pfam" id="PF03120">
    <property type="entry name" value="DNA_ligase_OB"/>
    <property type="match status" value="1"/>
</dbReference>
<dbReference type="Pfam" id="PF12826">
    <property type="entry name" value="HHH_2"/>
    <property type="match status" value="1"/>
</dbReference>
<dbReference type="Pfam" id="PF14520">
    <property type="entry name" value="HHH_5"/>
    <property type="match status" value="1"/>
</dbReference>
<dbReference type="PIRSF" id="PIRSF001604">
    <property type="entry name" value="LigA"/>
    <property type="match status" value="1"/>
</dbReference>
<dbReference type="SMART" id="SM00292">
    <property type="entry name" value="BRCT"/>
    <property type="match status" value="1"/>
</dbReference>
<dbReference type="SMART" id="SM00532">
    <property type="entry name" value="LIGANc"/>
    <property type="match status" value="1"/>
</dbReference>
<dbReference type="SUPFAM" id="SSF52113">
    <property type="entry name" value="BRCT domain"/>
    <property type="match status" value="1"/>
</dbReference>
<dbReference type="SUPFAM" id="SSF56091">
    <property type="entry name" value="DNA ligase/mRNA capping enzyme, catalytic domain"/>
    <property type="match status" value="1"/>
</dbReference>
<dbReference type="SUPFAM" id="SSF50249">
    <property type="entry name" value="Nucleic acid-binding proteins"/>
    <property type="match status" value="1"/>
</dbReference>
<dbReference type="SUPFAM" id="SSF47781">
    <property type="entry name" value="RuvA domain 2-like"/>
    <property type="match status" value="1"/>
</dbReference>
<dbReference type="PROSITE" id="PS50172">
    <property type="entry name" value="BRCT"/>
    <property type="match status" value="1"/>
</dbReference>
<dbReference type="PROSITE" id="PS01056">
    <property type="entry name" value="DNA_LIGASE_N2"/>
    <property type="match status" value="1"/>
</dbReference>
<keyword id="KW-0227">DNA damage</keyword>
<keyword id="KW-0234">DNA repair</keyword>
<keyword id="KW-0235">DNA replication</keyword>
<keyword id="KW-0436">Ligase</keyword>
<keyword id="KW-0460">Magnesium</keyword>
<keyword id="KW-0464">Manganese</keyword>
<keyword id="KW-0479">Metal-binding</keyword>
<keyword id="KW-0520">NAD</keyword>
<keyword id="KW-1185">Reference proteome</keyword>
<keyword id="KW-0862">Zinc</keyword>
<comment type="function">
    <text evidence="1">DNA ligase that catalyzes the formation of phosphodiester linkages between 5'-phosphoryl and 3'-hydroxyl groups in double-stranded DNA using NAD as a coenzyme and as the energy source for the reaction. It is essential for DNA replication and repair of damaged DNA.</text>
</comment>
<comment type="catalytic activity">
    <reaction evidence="1">
        <text>NAD(+) + (deoxyribonucleotide)n-3'-hydroxyl + 5'-phospho-(deoxyribonucleotide)m = (deoxyribonucleotide)n+m + AMP + beta-nicotinamide D-nucleotide.</text>
        <dbReference type="EC" id="6.5.1.2"/>
    </reaction>
</comment>
<comment type="cofactor">
    <cofactor evidence="1">
        <name>Mg(2+)</name>
        <dbReference type="ChEBI" id="CHEBI:18420"/>
    </cofactor>
    <cofactor evidence="1">
        <name>Mn(2+)</name>
        <dbReference type="ChEBI" id="CHEBI:29035"/>
    </cofactor>
</comment>
<comment type="similarity">
    <text evidence="1">Belongs to the NAD-dependent DNA ligase family. LigA subfamily.</text>
</comment>
<accession>Q18E49</accession>